<organism>
    <name type="scientific">Thiobacillus denitrificans (strain ATCC 25259 / T1)</name>
    <dbReference type="NCBI Taxonomy" id="292415"/>
    <lineage>
        <taxon>Bacteria</taxon>
        <taxon>Pseudomonadati</taxon>
        <taxon>Pseudomonadota</taxon>
        <taxon>Betaproteobacteria</taxon>
        <taxon>Nitrosomonadales</taxon>
        <taxon>Thiobacillaceae</taxon>
        <taxon>Thiobacillus</taxon>
    </lineage>
</organism>
<accession>Q3SLP3</accession>
<keyword id="KW-1185">Reference proteome</keyword>
<keyword id="KW-0687">Ribonucleoprotein</keyword>
<keyword id="KW-0689">Ribosomal protein</keyword>
<keyword id="KW-0694">RNA-binding</keyword>
<keyword id="KW-0699">rRNA-binding</keyword>
<proteinExistence type="inferred from homology"/>
<gene>
    <name evidence="1" type="primary">rpsC</name>
    <name type="ordered locus">Tbd_0411</name>
</gene>
<evidence type="ECO:0000255" key="1">
    <source>
        <dbReference type="HAMAP-Rule" id="MF_01309"/>
    </source>
</evidence>
<evidence type="ECO:0000256" key="2">
    <source>
        <dbReference type="SAM" id="MobiDB-lite"/>
    </source>
</evidence>
<evidence type="ECO:0000305" key="3"/>
<name>RS3_THIDA</name>
<sequence length="234" mass="26204">MGQKIHPIGFRLGVQRIWTAKWYGSNRNFSDTLLEDIKVRDYLKKKLSHASVSKVLIERPAKNARITIFSGRPGVVIGKKGEDIEVLRGELARLMSVPVHVNIEEVRKPETDAQIVADGIAQQLEKRVMFRRAMKRAMQNAMRLGAQGIKIMSSGRLNGAEIARTEWYREGRVPLHTLRAEIDYGFAEAKTTYGIIGIKVWVYKGDALTRGEQPAAAEQEKRGKKSGVKHAAAS</sequence>
<feature type="chain" id="PRO_0000230737" description="Small ribosomal subunit protein uS3">
    <location>
        <begin position="1"/>
        <end position="234"/>
    </location>
</feature>
<feature type="domain" description="KH type-2" evidence="1">
    <location>
        <begin position="39"/>
        <end position="107"/>
    </location>
</feature>
<feature type="region of interest" description="Disordered" evidence="2">
    <location>
        <begin position="212"/>
        <end position="234"/>
    </location>
</feature>
<comment type="function">
    <text evidence="1">Binds the lower part of the 30S subunit head. Binds mRNA in the 70S ribosome, positioning it for translation.</text>
</comment>
<comment type="subunit">
    <text evidence="1">Part of the 30S ribosomal subunit. Forms a tight complex with proteins S10 and S14.</text>
</comment>
<comment type="similarity">
    <text evidence="1">Belongs to the universal ribosomal protein uS3 family.</text>
</comment>
<dbReference type="EMBL" id="CP000116">
    <property type="protein sequence ID" value="AAZ96364.1"/>
    <property type="molecule type" value="Genomic_DNA"/>
</dbReference>
<dbReference type="RefSeq" id="WP_011310923.1">
    <property type="nucleotide sequence ID" value="NC_007404.1"/>
</dbReference>
<dbReference type="SMR" id="Q3SLP3"/>
<dbReference type="STRING" id="292415.Tbd_0411"/>
<dbReference type="KEGG" id="tbd:Tbd_0411"/>
<dbReference type="eggNOG" id="COG0092">
    <property type="taxonomic scope" value="Bacteria"/>
</dbReference>
<dbReference type="HOGENOM" id="CLU_058591_0_2_4"/>
<dbReference type="OrthoDB" id="9806396at2"/>
<dbReference type="Proteomes" id="UP000008291">
    <property type="component" value="Chromosome"/>
</dbReference>
<dbReference type="GO" id="GO:0022627">
    <property type="term" value="C:cytosolic small ribosomal subunit"/>
    <property type="evidence" value="ECO:0007669"/>
    <property type="project" value="TreeGrafter"/>
</dbReference>
<dbReference type="GO" id="GO:0003729">
    <property type="term" value="F:mRNA binding"/>
    <property type="evidence" value="ECO:0007669"/>
    <property type="project" value="UniProtKB-UniRule"/>
</dbReference>
<dbReference type="GO" id="GO:0019843">
    <property type="term" value="F:rRNA binding"/>
    <property type="evidence" value="ECO:0007669"/>
    <property type="project" value="UniProtKB-UniRule"/>
</dbReference>
<dbReference type="GO" id="GO:0003735">
    <property type="term" value="F:structural constituent of ribosome"/>
    <property type="evidence" value="ECO:0007669"/>
    <property type="project" value="InterPro"/>
</dbReference>
<dbReference type="GO" id="GO:0006412">
    <property type="term" value="P:translation"/>
    <property type="evidence" value="ECO:0007669"/>
    <property type="project" value="UniProtKB-UniRule"/>
</dbReference>
<dbReference type="CDD" id="cd02412">
    <property type="entry name" value="KH-II_30S_S3"/>
    <property type="match status" value="1"/>
</dbReference>
<dbReference type="FunFam" id="3.30.1140.32:FF:000006">
    <property type="entry name" value="30S ribosomal protein S3"/>
    <property type="match status" value="1"/>
</dbReference>
<dbReference type="FunFam" id="3.30.300.20:FF:000001">
    <property type="entry name" value="30S ribosomal protein S3"/>
    <property type="match status" value="1"/>
</dbReference>
<dbReference type="Gene3D" id="3.30.300.20">
    <property type="match status" value="1"/>
</dbReference>
<dbReference type="Gene3D" id="3.30.1140.32">
    <property type="entry name" value="Ribosomal protein S3, C-terminal domain"/>
    <property type="match status" value="1"/>
</dbReference>
<dbReference type="HAMAP" id="MF_01309_B">
    <property type="entry name" value="Ribosomal_uS3_B"/>
    <property type="match status" value="1"/>
</dbReference>
<dbReference type="InterPro" id="IPR004087">
    <property type="entry name" value="KH_dom"/>
</dbReference>
<dbReference type="InterPro" id="IPR015946">
    <property type="entry name" value="KH_dom-like_a/b"/>
</dbReference>
<dbReference type="InterPro" id="IPR004044">
    <property type="entry name" value="KH_dom_type_2"/>
</dbReference>
<dbReference type="InterPro" id="IPR009019">
    <property type="entry name" value="KH_sf_prok-type"/>
</dbReference>
<dbReference type="InterPro" id="IPR036419">
    <property type="entry name" value="Ribosomal_S3_C_sf"/>
</dbReference>
<dbReference type="InterPro" id="IPR005704">
    <property type="entry name" value="Ribosomal_uS3_bac-typ"/>
</dbReference>
<dbReference type="InterPro" id="IPR001351">
    <property type="entry name" value="Ribosomal_uS3_C"/>
</dbReference>
<dbReference type="InterPro" id="IPR018280">
    <property type="entry name" value="Ribosomal_uS3_CS"/>
</dbReference>
<dbReference type="NCBIfam" id="TIGR01009">
    <property type="entry name" value="rpsC_bact"/>
    <property type="match status" value="1"/>
</dbReference>
<dbReference type="PANTHER" id="PTHR11760">
    <property type="entry name" value="30S/40S RIBOSOMAL PROTEIN S3"/>
    <property type="match status" value="1"/>
</dbReference>
<dbReference type="PANTHER" id="PTHR11760:SF19">
    <property type="entry name" value="SMALL RIBOSOMAL SUBUNIT PROTEIN US3C"/>
    <property type="match status" value="1"/>
</dbReference>
<dbReference type="Pfam" id="PF07650">
    <property type="entry name" value="KH_2"/>
    <property type="match status" value="1"/>
</dbReference>
<dbReference type="Pfam" id="PF00189">
    <property type="entry name" value="Ribosomal_S3_C"/>
    <property type="match status" value="1"/>
</dbReference>
<dbReference type="SMART" id="SM00322">
    <property type="entry name" value="KH"/>
    <property type="match status" value="1"/>
</dbReference>
<dbReference type="SUPFAM" id="SSF54814">
    <property type="entry name" value="Prokaryotic type KH domain (KH-domain type II)"/>
    <property type="match status" value="1"/>
</dbReference>
<dbReference type="SUPFAM" id="SSF54821">
    <property type="entry name" value="Ribosomal protein S3 C-terminal domain"/>
    <property type="match status" value="1"/>
</dbReference>
<dbReference type="PROSITE" id="PS50823">
    <property type="entry name" value="KH_TYPE_2"/>
    <property type="match status" value="1"/>
</dbReference>
<dbReference type="PROSITE" id="PS00548">
    <property type="entry name" value="RIBOSOMAL_S3"/>
    <property type="match status" value="1"/>
</dbReference>
<protein>
    <recommendedName>
        <fullName evidence="1">Small ribosomal subunit protein uS3</fullName>
    </recommendedName>
    <alternativeName>
        <fullName evidence="3">30S ribosomal protein S3</fullName>
    </alternativeName>
</protein>
<reference key="1">
    <citation type="journal article" date="2006" name="J. Bacteriol.">
        <title>The genome sequence of the obligately chemolithoautotrophic, facultatively anaerobic bacterium Thiobacillus denitrificans.</title>
        <authorList>
            <person name="Beller H.R."/>
            <person name="Chain P.S."/>
            <person name="Letain T.E."/>
            <person name="Chakicherla A."/>
            <person name="Larimer F.W."/>
            <person name="Richardson P.M."/>
            <person name="Coleman M.A."/>
            <person name="Wood A.P."/>
            <person name="Kelly D.P."/>
        </authorList>
    </citation>
    <scope>NUCLEOTIDE SEQUENCE [LARGE SCALE GENOMIC DNA]</scope>
    <source>
        <strain>ATCC 25259 / T1</strain>
    </source>
</reference>